<reference key="1">
    <citation type="submission" date="1996-12" db="EMBL/GenBank/DDBJ databases">
        <authorList>
            <person name="Nikiforov V."/>
            <person name="Yurieva O."/>
            <person name="Kholodii G."/>
            <person name="Minakhin L."/>
            <person name="Gorlenko Z."/>
            <person name="Kalyaeva E."/>
            <person name="Mindlin S."/>
        </authorList>
    </citation>
    <scope>NUCLEOTIDE SEQUENCE [GENOMIC DNA]</scope>
</reference>
<protein>
    <recommendedName>
        <fullName>Mercuric reductase</fullName>
        <ecNumber evidence="1">1.16.1.1</ecNumber>
    </recommendedName>
    <alternativeName>
        <fullName>Hg(II) reductase</fullName>
    </alternativeName>
</protein>
<organism>
    <name type="scientific">Alcaligenes sp</name>
    <dbReference type="NCBI Taxonomy" id="512"/>
    <lineage>
        <taxon>Bacteria</taxon>
        <taxon>Pseudomonadati</taxon>
        <taxon>Pseudomonadota</taxon>
        <taxon>Betaproteobacteria</taxon>
        <taxon>Burkholderiales</taxon>
        <taxon>Alcaligenaceae</taxon>
        <taxon>Alcaligenes</taxon>
    </lineage>
</organism>
<sequence>MYLNITGMTCDSCATHVKDALEKVPGVLSALVSYPKGSAQLATDPGTSPEALTAAVAGLGYKATPADAPSTSARGRLLGKALGWLGGGDKAGGDGDGLHVAVIGSGAAMAAALKAVEQGANVTLIERGTIGGTCVNVGCVPSKIMIRAAHIAHLRRESPFDGGIAATVPAIDRSKLLAQQQARVDELRHAKYEGILDDNPAITVLHGEARFKDDQSLAVRLNDGGERVVAFDRCLVATGASPAVPPIPGLKESPYWTSTEALVSDTIPERLAVIGSSVVALELAQAFARLGSKVTILARSTLFFREDPAIGEAVTAAFRAEGIKVLEYTQASQVAHVDGEFVLTTGYGEIRADQLLVATGRAPNTRSLALEAAGVAANAQGAIVIDKGMRTSTPHIYAAGDCTDQPQFVYVAAAAGTRAAINMTGGDAALDLTAMPAVVFTDPQVATVGYSEAEAHHDGIETDSRTLTLDNVPRALANFDTRGFIKLVIEEGSGRLIGVQAVAPEAGELIQTAVLAIRNRMTVQELADQLFPYLTMVEGLKLAAQTFSKDVKQLSCCAG</sequence>
<comment type="function">
    <text evidence="1">Resistance to Hg(2+) in bacteria appears to be governed by a specialized system which includes mercuric reductase. MerA protein is responsible for volatilizing mercury as Hg(0).</text>
</comment>
<comment type="catalytic activity">
    <reaction evidence="1">
        <text>Hg + NADP(+) + H(+) = Hg(2+) + NADPH</text>
        <dbReference type="Rhea" id="RHEA:23856"/>
        <dbReference type="ChEBI" id="CHEBI:15378"/>
        <dbReference type="ChEBI" id="CHEBI:16170"/>
        <dbReference type="ChEBI" id="CHEBI:16793"/>
        <dbReference type="ChEBI" id="CHEBI:57783"/>
        <dbReference type="ChEBI" id="CHEBI:58349"/>
        <dbReference type="EC" id="1.16.1.1"/>
    </reaction>
</comment>
<comment type="cofactor">
    <cofactor evidence="1">
        <name>FAD</name>
        <dbReference type="ChEBI" id="CHEBI:57692"/>
    </cofactor>
    <text evidence="1">Binds 1 FAD per subunit.</text>
</comment>
<comment type="subunit">
    <text evidence="1">Homodimer.</text>
</comment>
<comment type="miscellaneous">
    <text evidence="1">The active site is a redox-active disulfide bond.</text>
</comment>
<comment type="similarity">
    <text evidence="3">Belongs to the class-I pyridine nucleotide-disulfide oxidoreductase family.</text>
</comment>
<proteinExistence type="inferred from homology"/>
<geneLocation type="plasmid">
    <name>IncHI2 pMER610</name>
</geneLocation>
<evidence type="ECO:0000250" key="1">
    <source>
        <dbReference type="UniProtKB" id="P00392"/>
    </source>
</evidence>
<evidence type="ECO:0000255" key="2">
    <source>
        <dbReference type="PROSITE-ProRule" id="PRU00280"/>
    </source>
</evidence>
<evidence type="ECO:0000305" key="3"/>
<dbReference type="EC" id="1.16.1.1" evidence="1"/>
<dbReference type="EMBL" id="Y08993">
    <property type="protein sequence ID" value="CAA70190.1"/>
    <property type="molecule type" value="Genomic_DNA"/>
</dbReference>
<dbReference type="SMR" id="P94188"/>
<dbReference type="GO" id="GO:0050660">
    <property type="term" value="F:flavin adenine dinucleotide binding"/>
    <property type="evidence" value="ECO:0007669"/>
    <property type="project" value="InterPro"/>
</dbReference>
<dbReference type="GO" id="GO:0016152">
    <property type="term" value="F:mercury (II) reductase (NADP+) activity"/>
    <property type="evidence" value="ECO:0007669"/>
    <property type="project" value="UniProtKB-EC"/>
</dbReference>
<dbReference type="GO" id="GO:0045340">
    <property type="term" value="F:mercury ion binding"/>
    <property type="evidence" value="ECO:0007669"/>
    <property type="project" value="InterPro"/>
</dbReference>
<dbReference type="GO" id="GO:0003955">
    <property type="term" value="F:NAD(P)H dehydrogenase (quinone) activity"/>
    <property type="evidence" value="ECO:0007669"/>
    <property type="project" value="TreeGrafter"/>
</dbReference>
<dbReference type="GO" id="GO:0050661">
    <property type="term" value="F:NADP binding"/>
    <property type="evidence" value="ECO:0007669"/>
    <property type="project" value="InterPro"/>
</dbReference>
<dbReference type="GO" id="GO:0016668">
    <property type="term" value="F:oxidoreductase activity, acting on a sulfur group of donors, NAD(P) as acceptor"/>
    <property type="evidence" value="ECO:0007669"/>
    <property type="project" value="InterPro"/>
</dbReference>
<dbReference type="GO" id="GO:0050787">
    <property type="term" value="P:detoxification of mercury ion"/>
    <property type="evidence" value="ECO:0007669"/>
    <property type="project" value="InterPro"/>
</dbReference>
<dbReference type="CDD" id="cd00371">
    <property type="entry name" value="HMA"/>
    <property type="match status" value="1"/>
</dbReference>
<dbReference type="FunFam" id="3.30.70.100:FF:000001">
    <property type="entry name" value="ATPase copper transporting beta"/>
    <property type="match status" value="1"/>
</dbReference>
<dbReference type="FunFam" id="3.30.390.30:FF:000001">
    <property type="entry name" value="Dihydrolipoyl dehydrogenase"/>
    <property type="match status" value="1"/>
</dbReference>
<dbReference type="Gene3D" id="3.30.390.30">
    <property type="match status" value="1"/>
</dbReference>
<dbReference type="Gene3D" id="3.30.70.100">
    <property type="match status" value="1"/>
</dbReference>
<dbReference type="Gene3D" id="3.50.50.60">
    <property type="entry name" value="FAD/NAD(P)-binding domain"/>
    <property type="match status" value="2"/>
</dbReference>
<dbReference type="InterPro" id="IPR036188">
    <property type="entry name" value="FAD/NAD-bd_sf"/>
</dbReference>
<dbReference type="InterPro" id="IPR023753">
    <property type="entry name" value="FAD/NAD-binding_dom"/>
</dbReference>
<dbReference type="InterPro" id="IPR016156">
    <property type="entry name" value="FAD/NAD-linked_Rdtase_dimer_sf"/>
</dbReference>
<dbReference type="InterPro" id="IPR017969">
    <property type="entry name" value="Heavy-metal-associated_CS"/>
</dbReference>
<dbReference type="InterPro" id="IPR006121">
    <property type="entry name" value="HMA_dom"/>
</dbReference>
<dbReference type="InterPro" id="IPR036163">
    <property type="entry name" value="HMA_dom_sf"/>
</dbReference>
<dbReference type="InterPro" id="IPR021179">
    <property type="entry name" value="Mercury_reductase_MerA"/>
</dbReference>
<dbReference type="InterPro" id="IPR001100">
    <property type="entry name" value="Pyr_nuc-diS_OxRdtase"/>
</dbReference>
<dbReference type="InterPro" id="IPR004099">
    <property type="entry name" value="Pyr_nucl-diS_OxRdtase_dimer"/>
</dbReference>
<dbReference type="InterPro" id="IPR012999">
    <property type="entry name" value="Pyr_OxRdtase_I_AS"/>
</dbReference>
<dbReference type="NCBIfam" id="TIGR02053">
    <property type="entry name" value="MerA"/>
    <property type="match status" value="1"/>
</dbReference>
<dbReference type="NCBIfam" id="NF010311">
    <property type="entry name" value="PRK13748.1"/>
    <property type="match status" value="1"/>
</dbReference>
<dbReference type="PANTHER" id="PTHR43014">
    <property type="entry name" value="MERCURIC REDUCTASE"/>
    <property type="match status" value="1"/>
</dbReference>
<dbReference type="PANTHER" id="PTHR43014:SF2">
    <property type="entry name" value="MERCURIC REDUCTASE"/>
    <property type="match status" value="1"/>
</dbReference>
<dbReference type="Pfam" id="PF00403">
    <property type="entry name" value="HMA"/>
    <property type="match status" value="1"/>
</dbReference>
<dbReference type="Pfam" id="PF07992">
    <property type="entry name" value="Pyr_redox_2"/>
    <property type="match status" value="1"/>
</dbReference>
<dbReference type="Pfam" id="PF02852">
    <property type="entry name" value="Pyr_redox_dim"/>
    <property type="match status" value="1"/>
</dbReference>
<dbReference type="PIRSF" id="PIRSF000350">
    <property type="entry name" value="Mercury_reductase_MerA"/>
    <property type="match status" value="1"/>
</dbReference>
<dbReference type="PRINTS" id="PR00945">
    <property type="entry name" value="HGRDTASE"/>
</dbReference>
<dbReference type="SUPFAM" id="SSF51905">
    <property type="entry name" value="FAD/NAD(P)-binding domain"/>
    <property type="match status" value="1"/>
</dbReference>
<dbReference type="SUPFAM" id="SSF55424">
    <property type="entry name" value="FAD/NAD-linked reductases, dimerisation (C-terminal) domain"/>
    <property type="match status" value="1"/>
</dbReference>
<dbReference type="SUPFAM" id="SSF55008">
    <property type="entry name" value="HMA, heavy metal-associated domain"/>
    <property type="match status" value="1"/>
</dbReference>
<dbReference type="PROSITE" id="PS01047">
    <property type="entry name" value="HMA_1"/>
    <property type="match status" value="1"/>
</dbReference>
<dbReference type="PROSITE" id="PS50846">
    <property type="entry name" value="HMA_2"/>
    <property type="match status" value="1"/>
</dbReference>
<dbReference type="PROSITE" id="PS00076">
    <property type="entry name" value="PYRIDINE_REDOX_1"/>
    <property type="match status" value="1"/>
</dbReference>
<keyword id="KW-1015">Disulfide bond</keyword>
<keyword id="KW-0274">FAD</keyword>
<keyword id="KW-0285">Flavoprotein</keyword>
<keyword id="KW-0475">Mercuric resistance</keyword>
<keyword id="KW-0476">Mercury</keyword>
<keyword id="KW-0479">Metal-binding</keyword>
<keyword id="KW-0521">NADP</keyword>
<keyword id="KW-0560">Oxidoreductase</keyword>
<keyword id="KW-0614">Plasmid</keyword>
<keyword id="KW-0676">Redox-active center</keyword>
<name>MERA_ALCSP</name>
<feature type="chain" id="PRO_0000067994" description="Mercuric reductase">
    <location>
        <begin position="1"/>
        <end position="559"/>
    </location>
</feature>
<feature type="domain" description="HMA" evidence="2">
    <location>
        <begin position="1"/>
        <end position="64"/>
    </location>
</feature>
<feature type="binding site" evidence="2">
    <location>
        <position position="10"/>
    </location>
    <ligand>
        <name>a metal cation</name>
        <dbReference type="ChEBI" id="CHEBI:25213"/>
    </ligand>
</feature>
<feature type="binding site" evidence="2">
    <location>
        <position position="13"/>
    </location>
    <ligand>
        <name>a metal cation</name>
        <dbReference type="ChEBI" id="CHEBI:25213"/>
    </ligand>
</feature>
<feature type="binding site" evidence="1">
    <location>
        <position position="108"/>
    </location>
    <ligand>
        <name>FAD</name>
        <dbReference type="ChEBI" id="CHEBI:57692"/>
    </ligand>
</feature>
<feature type="binding site" evidence="1">
    <location>
        <position position="128"/>
    </location>
    <ligand>
        <name>FAD</name>
        <dbReference type="ChEBI" id="CHEBI:57692"/>
    </ligand>
</feature>
<feature type="binding site" evidence="1">
    <location>
        <position position="133"/>
    </location>
    <ligand>
        <name>FAD</name>
        <dbReference type="ChEBI" id="CHEBI:57692"/>
    </ligand>
</feature>
<feature type="binding site" evidence="1">
    <location>
        <position position="143"/>
    </location>
    <ligand>
        <name>FAD</name>
        <dbReference type="ChEBI" id="CHEBI:57692"/>
    </ligand>
</feature>
<feature type="binding site" evidence="1">
    <location>
        <position position="209"/>
    </location>
    <ligand>
        <name>FAD</name>
        <dbReference type="ChEBI" id="CHEBI:57692"/>
    </ligand>
</feature>
<feature type="binding site" evidence="1">
    <location>
        <position position="401"/>
    </location>
    <ligand>
        <name>FAD</name>
        <dbReference type="ChEBI" id="CHEBI:57692"/>
    </ligand>
</feature>
<feature type="binding site" evidence="1">
    <location>
        <position position="409"/>
    </location>
    <ligand>
        <name>FAD</name>
        <dbReference type="ChEBI" id="CHEBI:57692"/>
    </ligand>
</feature>
<feature type="binding site" evidence="1">
    <location>
        <position position="556"/>
    </location>
    <ligand>
        <name>Hg(2+)</name>
        <dbReference type="ChEBI" id="CHEBI:16793"/>
    </ligand>
</feature>
<feature type="binding site" evidence="1">
    <location>
        <position position="557"/>
    </location>
    <ligand>
        <name>Hg(2+)</name>
        <dbReference type="ChEBI" id="CHEBI:16793"/>
    </ligand>
</feature>
<feature type="disulfide bond" description="Redox-active" evidence="1">
    <location>
        <begin position="134"/>
        <end position="139"/>
    </location>
</feature>
<accession>P94188</accession>
<gene>
    <name type="primary">merA</name>
</gene>